<gene>
    <name type="primary">Vps54</name>
    <name type="synonym">Vps54l</name>
</gene>
<keyword id="KW-0175">Coiled coil</keyword>
<keyword id="KW-0333">Golgi apparatus</keyword>
<keyword id="KW-0472">Membrane</keyword>
<keyword id="KW-0597">Phosphoprotein</keyword>
<keyword id="KW-0653">Protein transport</keyword>
<keyword id="KW-1185">Reference proteome</keyword>
<keyword id="KW-0813">Transport</keyword>
<sequence length="965" mass="108842">MASSHSSSPVPQGSSSDVFFKKEVDPTKHVRPVQSLPDVCPKEPTVTDQHRWTVYHSKVNLPAALNDPTLAKRESDFFTKTWGLGFVDTEVIPSLYLPQISKEHFIAYQQEISQREKIHERCKNICPPKDTFDRTLLHIHDKSRTDLEQVPKIFMKPDFALDDSLTFNSVLPWSHFNTAGGKGNRDAASSKLLQEKLSHYLDIVEVNIAHQISLRSEAFFHAMTSQHELQDYLKKTSQAVKMLRDKIAQIDKVMCEGSLQILRLALTRNNCVKVSNKLKLMATVHQTQPTVQVLLSTSEFVGALDLIATTQEVLQQELQGVHSFRHLGSQLCELEKLIDKMMIAEFSTYSHSDLNRPLEGECQVLEEERLVSLVFGLLEQRKLNFLEIYGEETIITAKNIIKECVINKVAQVEEIDTDAVVKLADQMRMLNFPQWIDLLKDIFSKFTIFLQRVKATLNVIHSVVLSVLDKNQRTRELEEVSQQRSAGKDNSLDTEVAYLTHEGLFISDAFSEAEPASAAVDTTSQRNTSPHSEPCSSDSVSEPECTTDSSSSKEQTPASATLGGVDIIVSEDMRLTDLELGKLASNIQELLCNASDVCHDRAVKFLMSRAKDGFLEKLNSTEFIALSRLMETYIVDTEQICGRKSTSLLGALQSQANKFVNRFHEERRTKLSLLLDNERWKQADVPAEFQDLVDSIADGKIALPDKKPAATEDRKPADVLVVEGHQYAVVGTVLLLIRIILEYCQCVDNIPSVTTDMLTRLTDLLKYFNSRSCQLVLGAGALQVVGLKTITTKNLALSSRCLQLIVHYIPVIRAHFEARLPRKQWSLLRHFDHITKDYHDHIGEISSKLIAIMDSLFDKLLSRCEVEAPAPSPCFRNICKQMTKMHEAIFDLLPKEQTQMLILRINASYKFHLKKQLSHLNVINDGGPQSGFVTADVAFYTGNLQALKGLKDLDLNMAEIWEQKR</sequence>
<evidence type="ECO:0000250" key="1">
    <source>
        <dbReference type="UniProtKB" id="Q9P1Q0"/>
    </source>
</evidence>
<evidence type="ECO:0000255" key="2"/>
<evidence type="ECO:0000256" key="3">
    <source>
        <dbReference type="SAM" id="MobiDB-lite"/>
    </source>
</evidence>
<evidence type="ECO:0000269" key="4">
    <source>
    </source>
</evidence>
<evidence type="ECO:0000269" key="5">
    <source>
    </source>
</evidence>
<evidence type="ECO:0000305" key="6"/>
<accession>Q9JMK8</accession>
<organism>
    <name type="scientific">Rattus norvegicus</name>
    <name type="common">Rat</name>
    <dbReference type="NCBI Taxonomy" id="10116"/>
    <lineage>
        <taxon>Eukaryota</taxon>
        <taxon>Metazoa</taxon>
        <taxon>Chordata</taxon>
        <taxon>Craniata</taxon>
        <taxon>Vertebrata</taxon>
        <taxon>Euteleostomi</taxon>
        <taxon>Mammalia</taxon>
        <taxon>Eutheria</taxon>
        <taxon>Euarchontoglires</taxon>
        <taxon>Glires</taxon>
        <taxon>Rodentia</taxon>
        <taxon>Myomorpha</taxon>
        <taxon>Muroidea</taxon>
        <taxon>Muridae</taxon>
        <taxon>Murinae</taxon>
        <taxon>Rattus</taxon>
    </lineage>
</organism>
<dbReference type="EMBL" id="AJ010392">
    <property type="protein sequence ID" value="CAB96885.1"/>
    <property type="molecule type" value="mRNA"/>
</dbReference>
<dbReference type="RefSeq" id="NP_775170.1">
    <property type="nucleotide sequence ID" value="NM_173147.1"/>
</dbReference>
<dbReference type="SMR" id="Q9JMK8"/>
<dbReference type="FunCoup" id="Q9JMK8">
    <property type="interactions" value="2320"/>
</dbReference>
<dbReference type="STRING" id="10116.ENSRNOP00000010264"/>
<dbReference type="PhosphoSitePlus" id="Q9JMK8"/>
<dbReference type="PaxDb" id="10116-ENSRNOP00000010264"/>
<dbReference type="PeptideAtlas" id="Q9JMK8"/>
<dbReference type="GeneID" id="286932"/>
<dbReference type="KEGG" id="rno:286932"/>
<dbReference type="UCSC" id="RGD:628718">
    <property type="organism name" value="rat"/>
</dbReference>
<dbReference type="AGR" id="RGD:628718"/>
<dbReference type="CTD" id="51542"/>
<dbReference type="RGD" id="628718">
    <property type="gene designation" value="Vps54"/>
</dbReference>
<dbReference type="eggNOG" id="KOG2115">
    <property type="taxonomic scope" value="Eukaryota"/>
</dbReference>
<dbReference type="InParanoid" id="Q9JMK8"/>
<dbReference type="PhylomeDB" id="Q9JMK8"/>
<dbReference type="Reactome" id="R-RNO-6811440">
    <property type="pathway name" value="Retrograde transport at the Trans-Golgi-Network"/>
</dbReference>
<dbReference type="PRO" id="PR:Q9JMK8"/>
<dbReference type="Proteomes" id="UP000002494">
    <property type="component" value="Unplaced"/>
</dbReference>
<dbReference type="GO" id="GO:0005737">
    <property type="term" value="C:cytoplasm"/>
    <property type="evidence" value="ECO:0000266"/>
    <property type="project" value="RGD"/>
</dbReference>
<dbReference type="GO" id="GO:0005829">
    <property type="term" value="C:cytosol"/>
    <property type="evidence" value="ECO:0007669"/>
    <property type="project" value="GOC"/>
</dbReference>
<dbReference type="GO" id="GO:0000938">
    <property type="term" value="C:GARP complex"/>
    <property type="evidence" value="ECO:0000250"/>
    <property type="project" value="UniProtKB"/>
</dbReference>
<dbReference type="GO" id="GO:0005794">
    <property type="term" value="C:Golgi apparatus"/>
    <property type="evidence" value="ECO:0000266"/>
    <property type="project" value="RGD"/>
</dbReference>
<dbReference type="GO" id="GO:0016020">
    <property type="term" value="C:membrane"/>
    <property type="evidence" value="ECO:0000314"/>
    <property type="project" value="UniProtKB"/>
</dbReference>
<dbReference type="GO" id="GO:0005739">
    <property type="term" value="C:mitochondrion"/>
    <property type="evidence" value="ECO:0000266"/>
    <property type="project" value="RGD"/>
</dbReference>
<dbReference type="GO" id="GO:0048471">
    <property type="term" value="C:perinuclear region of cytoplasm"/>
    <property type="evidence" value="ECO:0000266"/>
    <property type="project" value="RGD"/>
</dbReference>
<dbReference type="GO" id="GO:0045202">
    <property type="term" value="C:synapse"/>
    <property type="evidence" value="ECO:0007669"/>
    <property type="project" value="GOC"/>
</dbReference>
<dbReference type="GO" id="GO:0005802">
    <property type="term" value="C:trans-Golgi network"/>
    <property type="evidence" value="ECO:0000314"/>
    <property type="project" value="MGI"/>
</dbReference>
<dbReference type="GO" id="GO:0019905">
    <property type="term" value="F:syntaxin binding"/>
    <property type="evidence" value="ECO:0000318"/>
    <property type="project" value="GO_Central"/>
</dbReference>
<dbReference type="GO" id="GO:0006309">
    <property type="term" value="P:apoptotic DNA fragmentation"/>
    <property type="evidence" value="ECO:0000266"/>
    <property type="project" value="RGD"/>
</dbReference>
<dbReference type="GO" id="GO:0048708">
    <property type="term" value="P:astrocyte differentiation"/>
    <property type="evidence" value="ECO:0000266"/>
    <property type="project" value="RGD"/>
</dbReference>
<dbReference type="GO" id="GO:0071393">
    <property type="term" value="P:cellular response to progesterone stimulus"/>
    <property type="evidence" value="ECO:0000266"/>
    <property type="project" value="RGD"/>
</dbReference>
<dbReference type="GO" id="GO:0010467">
    <property type="term" value="P:gene expression"/>
    <property type="evidence" value="ECO:0000266"/>
    <property type="project" value="RGD"/>
</dbReference>
<dbReference type="GO" id="GO:0006896">
    <property type="term" value="P:Golgi to vacuole transport"/>
    <property type="evidence" value="ECO:0000318"/>
    <property type="project" value="GO_Central"/>
</dbReference>
<dbReference type="GO" id="GO:0048872">
    <property type="term" value="P:homeostasis of number of cells"/>
    <property type="evidence" value="ECO:0000266"/>
    <property type="project" value="RGD"/>
</dbReference>
<dbReference type="GO" id="GO:0048873">
    <property type="term" value="P:homeostasis of number of cells within a tissue"/>
    <property type="evidence" value="ECO:0000266"/>
    <property type="project" value="RGD"/>
</dbReference>
<dbReference type="GO" id="GO:0001701">
    <property type="term" value="P:in utero embryonic development"/>
    <property type="evidence" value="ECO:0000266"/>
    <property type="project" value="RGD"/>
</dbReference>
<dbReference type="GO" id="GO:0006874">
    <property type="term" value="P:intracellular calcium ion homeostasis"/>
    <property type="evidence" value="ECO:0000266"/>
    <property type="project" value="RGD"/>
</dbReference>
<dbReference type="GO" id="GO:0051938">
    <property type="term" value="P:L-glutamate import"/>
    <property type="evidence" value="ECO:0000266"/>
    <property type="project" value="RGD"/>
</dbReference>
<dbReference type="GO" id="GO:0060173">
    <property type="term" value="P:limb development"/>
    <property type="evidence" value="ECO:0000266"/>
    <property type="project" value="RGD"/>
</dbReference>
<dbReference type="GO" id="GO:0035108">
    <property type="term" value="P:limb morphogenesis"/>
    <property type="evidence" value="ECO:0000266"/>
    <property type="project" value="RGD"/>
</dbReference>
<dbReference type="GO" id="GO:0007041">
    <property type="term" value="P:lysosomal transport"/>
    <property type="evidence" value="ECO:0000266"/>
    <property type="project" value="RGD"/>
</dbReference>
<dbReference type="GO" id="GO:0014004">
    <property type="term" value="P:microglia differentiation"/>
    <property type="evidence" value="ECO:0000266"/>
    <property type="project" value="RGD"/>
</dbReference>
<dbReference type="GO" id="GO:0007005">
    <property type="term" value="P:mitochondrion organization"/>
    <property type="evidence" value="ECO:0000266"/>
    <property type="project" value="RGD"/>
</dbReference>
<dbReference type="GO" id="GO:0061744">
    <property type="term" value="P:motor behavior"/>
    <property type="evidence" value="ECO:0000266"/>
    <property type="project" value="RGD"/>
</dbReference>
<dbReference type="GO" id="GO:0097049">
    <property type="term" value="P:motor neuron apoptotic process"/>
    <property type="evidence" value="ECO:0000266"/>
    <property type="project" value="RGD"/>
</dbReference>
<dbReference type="GO" id="GO:0050881">
    <property type="term" value="P:musculoskeletal movement"/>
    <property type="evidence" value="ECO:0000266"/>
    <property type="project" value="RGD"/>
</dbReference>
<dbReference type="GO" id="GO:2000672">
    <property type="term" value="P:negative regulation of motor neuron apoptotic process"/>
    <property type="evidence" value="ECO:0000266"/>
    <property type="project" value="RGD"/>
</dbReference>
<dbReference type="GO" id="GO:0097719">
    <property type="term" value="P:neural tissue regeneration"/>
    <property type="evidence" value="ECO:0000266"/>
    <property type="project" value="RGD"/>
</dbReference>
<dbReference type="GO" id="GO:0060052">
    <property type="term" value="P:neurofilament cytoskeleton organization"/>
    <property type="evidence" value="ECO:0000266"/>
    <property type="project" value="RGD"/>
</dbReference>
<dbReference type="GO" id="GO:0150076">
    <property type="term" value="P:neuroinflammatory response"/>
    <property type="evidence" value="ECO:0000266"/>
    <property type="project" value="RGD"/>
</dbReference>
<dbReference type="GO" id="GO:0007274">
    <property type="term" value="P:neuromuscular synaptic transmission"/>
    <property type="evidence" value="ECO:0000266"/>
    <property type="project" value="RGD"/>
</dbReference>
<dbReference type="GO" id="GO:0051402">
    <property type="term" value="P:neuron apoptotic process"/>
    <property type="evidence" value="ECO:0000266"/>
    <property type="project" value="RGD"/>
</dbReference>
<dbReference type="GO" id="GO:0048812">
    <property type="term" value="P:neuron projection morphogenesis"/>
    <property type="evidence" value="ECO:0000266"/>
    <property type="project" value="RGD"/>
</dbReference>
<dbReference type="GO" id="GO:0035128">
    <property type="term" value="P:post-embryonic forelimb morphogenesis"/>
    <property type="evidence" value="ECO:0000266"/>
    <property type="project" value="RGD"/>
</dbReference>
<dbReference type="GO" id="GO:0008104">
    <property type="term" value="P:protein localization"/>
    <property type="evidence" value="ECO:0000266"/>
    <property type="project" value="RGD"/>
</dbReference>
<dbReference type="GO" id="GO:0034394">
    <property type="term" value="P:protein localization to cell surface"/>
    <property type="evidence" value="ECO:0000266"/>
    <property type="project" value="RGD"/>
</dbReference>
<dbReference type="GO" id="GO:0045047">
    <property type="term" value="P:protein targeting to ER"/>
    <property type="evidence" value="ECO:0000266"/>
    <property type="project" value="RGD"/>
</dbReference>
<dbReference type="GO" id="GO:0006622">
    <property type="term" value="P:protein targeting to lysosome"/>
    <property type="evidence" value="ECO:0000266"/>
    <property type="project" value="RGD"/>
</dbReference>
<dbReference type="GO" id="GO:0006623">
    <property type="term" value="P:protein targeting to vacuole"/>
    <property type="evidence" value="ECO:0000266"/>
    <property type="project" value="RGD"/>
</dbReference>
<dbReference type="GO" id="GO:0040008">
    <property type="term" value="P:regulation of growth"/>
    <property type="evidence" value="ECO:0000266"/>
    <property type="project" value="RGD"/>
</dbReference>
<dbReference type="GO" id="GO:0022904">
    <property type="term" value="P:respiratory electron transport chain"/>
    <property type="evidence" value="ECO:0000266"/>
    <property type="project" value="RGD"/>
</dbReference>
<dbReference type="GO" id="GO:0046677">
    <property type="term" value="P:response to antibiotic"/>
    <property type="evidence" value="ECO:0000266"/>
    <property type="project" value="RGD"/>
</dbReference>
<dbReference type="GO" id="GO:0051592">
    <property type="term" value="P:response to calcium ion"/>
    <property type="evidence" value="ECO:0000266"/>
    <property type="project" value="RGD"/>
</dbReference>
<dbReference type="GO" id="GO:0042147">
    <property type="term" value="P:retrograde transport, endosome to Golgi"/>
    <property type="evidence" value="ECO:0000266"/>
    <property type="project" value="RGD"/>
</dbReference>
<dbReference type="GO" id="GO:0007519">
    <property type="term" value="P:skeletal muscle tissue development"/>
    <property type="evidence" value="ECO:0000266"/>
    <property type="project" value="RGD"/>
</dbReference>
<dbReference type="GO" id="GO:0048630">
    <property type="term" value="P:skeletal muscle tissue growth"/>
    <property type="evidence" value="ECO:0000266"/>
    <property type="project" value="RGD"/>
</dbReference>
<dbReference type="GO" id="GO:0048515">
    <property type="term" value="P:spermatid differentiation"/>
    <property type="evidence" value="ECO:0000266"/>
    <property type="project" value="RGD"/>
</dbReference>
<dbReference type="GO" id="GO:0030149">
    <property type="term" value="P:sphingolipid catabolic process"/>
    <property type="evidence" value="ECO:0000266"/>
    <property type="project" value="RGD"/>
</dbReference>
<dbReference type="GO" id="GO:0006941">
    <property type="term" value="P:striated muscle contraction"/>
    <property type="evidence" value="ECO:0000266"/>
    <property type="project" value="RGD"/>
</dbReference>
<dbReference type="GO" id="GO:0051932">
    <property type="term" value="P:synaptic transmission, GABAergic"/>
    <property type="evidence" value="ECO:0000266"/>
    <property type="project" value="RGD"/>
</dbReference>
<dbReference type="GO" id="GO:0035249">
    <property type="term" value="P:synaptic transmission, glutamatergic"/>
    <property type="evidence" value="ECO:0000266"/>
    <property type="project" value="RGD"/>
</dbReference>
<dbReference type="GO" id="GO:0070493">
    <property type="term" value="P:thrombin-activated receptor signaling pathway"/>
    <property type="evidence" value="ECO:0000266"/>
    <property type="project" value="RGD"/>
</dbReference>
<dbReference type="GO" id="GO:0010992">
    <property type="term" value="P:ubiquitin recycling"/>
    <property type="evidence" value="ECO:0000266"/>
    <property type="project" value="RGD"/>
</dbReference>
<dbReference type="GO" id="GO:0007033">
    <property type="term" value="P:vacuole organization"/>
    <property type="evidence" value="ECO:0000266"/>
    <property type="project" value="RGD"/>
</dbReference>
<dbReference type="GO" id="GO:0090119">
    <property type="term" value="P:vesicle-mediated cholesterol transport"/>
    <property type="evidence" value="ECO:0000266"/>
    <property type="project" value="RGD"/>
</dbReference>
<dbReference type="FunFam" id="1.20.1280.130:FF:000001">
    <property type="entry name" value="Vacuolar protein sorting-associated protein 54"/>
    <property type="match status" value="1"/>
</dbReference>
<dbReference type="Gene3D" id="1.20.1280.130">
    <property type="match status" value="1"/>
</dbReference>
<dbReference type="Gene3D" id="6.10.250.860">
    <property type="match status" value="1"/>
</dbReference>
<dbReference type="InterPro" id="IPR039745">
    <property type="entry name" value="Vps54"/>
</dbReference>
<dbReference type="InterPro" id="IPR012501">
    <property type="entry name" value="Vps54_C"/>
</dbReference>
<dbReference type="InterPro" id="IPR019515">
    <property type="entry name" value="VPS54_N"/>
</dbReference>
<dbReference type="PANTHER" id="PTHR12965">
    <property type="entry name" value="VACUOLAR PROTEIN SORTING 54"/>
    <property type="match status" value="1"/>
</dbReference>
<dbReference type="PANTHER" id="PTHR12965:SF0">
    <property type="entry name" value="VACUOLAR PROTEIN SORTING-ASSOCIATED PROTEIN 54"/>
    <property type="match status" value="1"/>
</dbReference>
<dbReference type="Pfam" id="PF07928">
    <property type="entry name" value="Vps54"/>
    <property type="match status" value="1"/>
</dbReference>
<dbReference type="Pfam" id="PF10475">
    <property type="entry name" value="Vps54_N"/>
    <property type="match status" value="1"/>
</dbReference>
<feature type="chain" id="PRO_0000148733" description="Vacuolar protein sorting-associated protein 54">
    <location>
        <begin position="1"/>
        <end position="965"/>
    </location>
</feature>
<feature type="region of interest" description="Disordered" evidence="3">
    <location>
        <begin position="516"/>
        <end position="558"/>
    </location>
</feature>
<feature type="coiled-coil region" evidence="2">
    <location>
        <begin position="228"/>
        <end position="249"/>
    </location>
</feature>
<feature type="compositionally biased region" description="Polar residues" evidence="3">
    <location>
        <begin position="520"/>
        <end position="558"/>
    </location>
</feature>
<feature type="modified residue" description="Phosphoserine" evidence="1">
    <location>
        <position position="8"/>
    </location>
</feature>
<comment type="function">
    <text evidence="1">Acts as a component of the GARP complex that is involved in retrograde transport from early and late endosomes to the trans-Golgi network (TGN). The GARP complex is required for the maintenance of the cycling of mannose 6-phosphate receptors between the TGN and endosomes, this cycling is necessary for proper lysosomal sorting of acid hydrolases such as CTSD. Within the GARP complex, required to tether the complex to the TGN. Not involved in endocytic recycling.</text>
</comment>
<comment type="subunit">
    <text evidence="1">Component of the Golgi-associated retrograde protein (GARP) complex, also called VFT (VPS fifty-three) complex, composed of VPS51, VPS52, VPS53 and VPS54 (By similarity). EIPR1 interacts with GARP complex and mediates its recruitment to the trans-Golgi network (By similarity). Interacts with VPS51 in an EIPR1-independent manner (By similarity).</text>
</comment>
<comment type="subcellular location">
    <subcellularLocation>
        <location evidence="1">Golgi apparatus</location>
        <location evidence="1">trans-Golgi network</location>
    </subcellularLocation>
    <subcellularLocation>
        <location evidence="5">Membrane</location>
    </subcellularLocation>
    <text evidence="5">Associates with membranes in an EIPR1-independent manner.</text>
</comment>
<comment type="tissue specificity">
    <text evidence="4">Ubiquitously expressed at low level.</text>
</comment>
<comment type="similarity">
    <text evidence="6">Belongs to the VPS54 family.</text>
</comment>
<proteinExistence type="evidence at transcript level"/>
<protein>
    <recommendedName>
        <fullName>Vacuolar protein sorting-associated protein 54</fullName>
    </recommendedName>
    <alternativeName>
        <fullName>Vps54-like protein</fullName>
    </alternativeName>
</protein>
<reference key="1">
    <citation type="journal article" date="2002" name="Gene">
        <title>Identification, characterization and cytogenetic mapping of a yeast Vps54 homolog in rat and mouse.</title>
        <authorList>
            <person name="Walter L."/>
            <person name="Stark S."/>
            <person name="Helou K."/>
            <person name="Fluegge P."/>
            <person name="Levan G."/>
            <person name="Guenther E."/>
        </authorList>
    </citation>
    <scope>NUCLEOTIDE SEQUENCE [MRNA]</scope>
    <scope>TISSUE SPECIFICITY</scope>
    <source>
        <strain>Louvain</strain>
    </source>
</reference>
<reference key="2">
    <citation type="journal article" date="2020" name="Mol. Biol. Cell">
        <title>EIPR1 controls dense-core vesicle cargo retention and EARP complex localization in insulin-secreting cells.</title>
        <authorList>
            <person name="Topalidou I."/>
            <person name="Cattin-Ortola J."/>
            <person name="Hummer B."/>
            <person name="Asensio C.S."/>
            <person name="Ailion M."/>
        </authorList>
    </citation>
    <scope>SUBCELLULAR LOCATION</scope>
</reference>
<name>VPS54_RAT</name>